<dbReference type="EMBL" id="CP000577">
    <property type="protein sequence ID" value="ABN75486.1"/>
    <property type="molecule type" value="Genomic_DNA"/>
</dbReference>
<dbReference type="RefSeq" id="WP_002722502.1">
    <property type="nucleotide sequence ID" value="NC_009049.1"/>
</dbReference>
<dbReference type="SMR" id="A3PGM0"/>
<dbReference type="GeneID" id="67445509"/>
<dbReference type="KEGG" id="rsh:Rsph17029_0370"/>
<dbReference type="HOGENOM" id="CLU_073626_1_1_5"/>
<dbReference type="GO" id="GO:0022627">
    <property type="term" value="C:cytosolic small ribosomal subunit"/>
    <property type="evidence" value="ECO:0007669"/>
    <property type="project" value="TreeGrafter"/>
</dbReference>
<dbReference type="GO" id="GO:0019843">
    <property type="term" value="F:rRNA binding"/>
    <property type="evidence" value="ECO:0007669"/>
    <property type="project" value="UniProtKB-UniRule"/>
</dbReference>
<dbReference type="GO" id="GO:0003735">
    <property type="term" value="F:structural constituent of ribosome"/>
    <property type="evidence" value="ECO:0007669"/>
    <property type="project" value="InterPro"/>
</dbReference>
<dbReference type="GO" id="GO:0006412">
    <property type="term" value="P:translation"/>
    <property type="evidence" value="ECO:0007669"/>
    <property type="project" value="UniProtKB-UniRule"/>
</dbReference>
<dbReference type="CDD" id="cd00364">
    <property type="entry name" value="Ribosomal_uS17"/>
    <property type="match status" value="1"/>
</dbReference>
<dbReference type="Gene3D" id="2.40.50.140">
    <property type="entry name" value="Nucleic acid-binding proteins"/>
    <property type="match status" value="1"/>
</dbReference>
<dbReference type="HAMAP" id="MF_01345_B">
    <property type="entry name" value="Ribosomal_uS17_B"/>
    <property type="match status" value="1"/>
</dbReference>
<dbReference type="InterPro" id="IPR012340">
    <property type="entry name" value="NA-bd_OB-fold"/>
</dbReference>
<dbReference type="InterPro" id="IPR000266">
    <property type="entry name" value="Ribosomal_uS17"/>
</dbReference>
<dbReference type="InterPro" id="IPR019984">
    <property type="entry name" value="Ribosomal_uS17_bact/chlr"/>
</dbReference>
<dbReference type="NCBIfam" id="NF004123">
    <property type="entry name" value="PRK05610.1"/>
    <property type="match status" value="1"/>
</dbReference>
<dbReference type="NCBIfam" id="TIGR03635">
    <property type="entry name" value="uS17_bact"/>
    <property type="match status" value="1"/>
</dbReference>
<dbReference type="PANTHER" id="PTHR10744">
    <property type="entry name" value="40S RIBOSOMAL PROTEIN S11 FAMILY MEMBER"/>
    <property type="match status" value="1"/>
</dbReference>
<dbReference type="PANTHER" id="PTHR10744:SF1">
    <property type="entry name" value="SMALL RIBOSOMAL SUBUNIT PROTEIN US17M"/>
    <property type="match status" value="1"/>
</dbReference>
<dbReference type="Pfam" id="PF00366">
    <property type="entry name" value="Ribosomal_S17"/>
    <property type="match status" value="1"/>
</dbReference>
<dbReference type="PRINTS" id="PR00973">
    <property type="entry name" value="RIBOSOMALS17"/>
</dbReference>
<dbReference type="SUPFAM" id="SSF50249">
    <property type="entry name" value="Nucleic acid-binding proteins"/>
    <property type="match status" value="1"/>
</dbReference>
<comment type="function">
    <text evidence="1">One of the primary rRNA binding proteins, it binds specifically to the 5'-end of 16S ribosomal RNA.</text>
</comment>
<comment type="subunit">
    <text evidence="1">Part of the 30S ribosomal subunit.</text>
</comment>
<comment type="similarity">
    <text evidence="1">Belongs to the universal ribosomal protein uS17 family.</text>
</comment>
<evidence type="ECO:0000255" key="1">
    <source>
        <dbReference type="HAMAP-Rule" id="MF_01345"/>
    </source>
</evidence>
<evidence type="ECO:0000305" key="2"/>
<feature type="chain" id="PRO_1000055007" description="Small ribosomal subunit protein uS17">
    <location>
        <begin position="1"/>
        <end position="80"/>
    </location>
</feature>
<protein>
    <recommendedName>
        <fullName evidence="1">Small ribosomal subunit protein uS17</fullName>
    </recommendedName>
    <alternativeName>
        <fullName evidence="2">30S ribosomal protein S17</fullName>
    </alternativeName>
</protein>
<gene>
    <name evidence="1" type="primary">rpsQ</name>
    <name type="ordered locus">Rsph17029_0370</name>
</gene>
<sequence length="80" mass="9257">MPKRILQGTVTSDKNEQTVTVLVERRFKHPLLKKTVRLSKKYRAHDPENQFKVGDIVRIEECAPISKTKRWKVVTDAVVA</sequence>
<reference key="1">
    <citation type="submission" date="2007-02" db="EMBL/GenBank/DDBJ databases">
        <title>Complete sequence of chromosome 1 of Rhodobacter sphaeroides ATCC 17029.</title>
        <authorList>
            <person name="Copeland A."/>
            <person name="Lucas S."/>
            <person name="Lapidus A."/>
            <person name="Barry K."/>
            <person name="Detter J.C."/>
            <person name="Glavina del Rio T."/>
            <person name="Hammon N."/>
            <person name="Israni S."/>
            <person name="Dalin E."/>
            <person name="Tice H."/>
            <person name="Pitluck S."/>
            <person name="Kiss H."/>
            <person name="Brettin T."/>
            <person name="Bruce D."/>
            <person name="Han C."/>
            <person name="Tapia R."/>
            <person name="Gilna P."/>
            <person name="Schmutz J."/>
            <person name="Larimer F."/>
            <person name="Land M."/>
            <person name="Hauser L."/>
            <person name="Kyrpides N."/>
            <person name="Mikhailova N."/>
            <person name="Richardson P."/>
            <person name="Mackenzie C."/>
            <person name="Choudhary M."/>
            <person name="Donohue T.J."/>
            <person name="Kaplan S."/>
        </authorList>
    </citation>
    <scope>NUCLEOTIDE SEQUENCE [LARGE SCALE GENOMIC DNA]</scope>
    <source>
        <strain>ATCC 17029 / ATH 2.4.9</strain>
    </source>
</reference>
<accession>A3PGM0</accession>
<proteinExistence type="inferred from homology"/>
<keyword id="KW-0687">Ribonucleoprotein</keyword>
<keyword id="KW-0689">Ribosomal protein</keyword>
<keyword id="KW-0694">RNA-binding</keyword>
<keyword id="KW-0699">rRNA-binding</keyword>
<name>RS17_CERS1</name>
<organism>
    <name type="scientific">Cereibacter sphaeroides (strain ATCC 17029 / ATH 2.4.9)</name>
    <name type="common">Rhodobacter sphaeroides</name>
    <dbReference type="NCBI Taxonomy" id="349101"/>
    <lineage>
        <taxon>Bacteria</taxon>
        <taxon>Pseudomonadati</taxon>
        <taxon>Pseudomonadota</taxon>
        <taxon>Alphaproteobacteria</taxon>
        <taxon>Rhodobacterales</taxon>
        <taxon>Paracoccaceae</taxon>
        <taxon>Cereibacter</taxon>
    </lineage>
</organism>